<organismHost>
    <name type="scientific">Escherichia coli</name>
    <dbReference type="NCBI Taxonomy" id="562"/>
</organismHost>
<sequence length="68" mass="7621">MVTVAELQALRQARLDLLTGKRVVSVQKDGRRIEYTAASLDELNRAINDAESVLGTTRCRRRPLGVRL</sequence>
<keyword id="KW-0426">Late protein</keyword>
<keyword id="KW-0118">Viral capsid assembly</keyword>
<keyword id="KW-1188">Viral release from host cell</keyword>
<keyword id="KW-0946">Virion</keyword>
<feature type="chain" id="PRO_0000077648" description="Head completion protein gp3">
    <location>
        <begin position="1"/>
        <end position="68"/>
    </location>
</feature>
<name>W_BPP21</name>
<gene>
    <name type="primary">3</name>
</gene>
<dbReference type="EMBL" id="M81255">
    <property type="protein sequence ID" value="AAA32341.1"/>
    <property type="molecule type" value="Genomic_DNA"/>
</dbReference>
<dbReference type="PIR" id="JN0537">
    <property type="entry name" value="JN0537"/>
</dbReference>
<dbReference type="SMR" id="P68656"/>
<dbReference type="GO" id="GO:0044423">
    <property type="term" value="C:virion component"/>
    <property type="evidence" value="ECO:0007669"/>
    <property type="project" value="UniProtKB-KW"/>
</dbReference>
<dbReference type="GO" id="GO:0019058">
    <property type="term" value="P:viral life cycle"/>
    <property type="evidence" value="ECO:0007669"/>
    <property type="project" value="InterPro"/>
</dbReference>
<dbReference type="Gene3D" id="3.30.1580.10">
    <property type="entry name" value="Head-to-tail joining protein W"/>
    <property type="match status" value="1"/>
</dbReference>
<dbReference type="InterPro" id="IPR004174">
    <property type="entry name" value="GpW"/>
</dbReference>
<dbReference type="InterPro" id="IPR036626">
    <property type="entry name" value="GpW_sf"/>
</dbReference>
<dbReference type="NCBIfam" id="NF047331">
    <property type="entry name" value="phage_HTJ"/>
    <property type="match status" value="1"/>
</dbReference>
<dbReference type="Pfam" id="PF02831">
    <property type="entry name" value="gpW"/>
    <property type="match status" value="1"/>
</dbReference>
<dbReference type="SUPFAM" id="SSF64210">
    <property type="entry name" value="Head-to-tail joining protein W, gpW"/>
    <property type="match status" value="1"/>
</dbReference>
<reference key="1">
    <citation type="journal article" date="1993" name="Gene">
        <title>Sequence analysis of the phage 21 genes for prohead assembly and head completion.</title>
        <authorList>
            <person name="Smith M.P."/>
            <person name="Feiss M."/>
        </authorList>
    </citation>
    <scope>NUCLEOTIDE SEQUENCE [GENOMIC DNA]</scope>
</reference>
<evidence type="ECO:0000250" key="1">
    <source>
        <dbReference type="UniProtKB" id="P68660"/>
    </source>
</evidence>
<evidence type="ECO:0000305" key="2"/>
<comment type="function">
    <text evidence="1">Plays a role in morphogenesis of the virion head after genome packaging. Presumably interacts with the portal vertex to stabilize the packaged DNA within the head after packaging. Probably binds to the head-tail connector protein gp8.</text>
</comment>
<comment type="subunit">
    <text evidence="1">Monomer in solution, assembles into hexamers on the prohead. May bind gp8 and portal protein (Potential).</text>
</comment>
<comment type="subcellular location">
    <subcellularLocation>
        <location evidence="1">Virion</location>
    </subcellularLocation>
    <text evidence="1">Probably part of the head-tail connector.</text>
</comment>
<comment type="similarity">
    <text evidence="2">Belongs to the lambda phage gpW family.</text>
</comment>
<organism>
    <name type="scientific">Enterobacteria phage P21</name>
    <name type="common">Bacteriophage 21</name>
    <name type="synonym">Bacteriophage P21</name>
    <dbReference type="NCBI Taxonomy" id="10711"/>
    <lineage>
        <taxon>Viruses</taxon>
        <taxon>Duplodnaviria</taxon>
        <taxon>Heunggongvirae</taxon>
        <taxon>Uroviricota</taxon>
        <taxon>Caudoviricetes</taxon>
        <taxon>Lambdavirus</taxon>
        <taxon>Lambdavirus lambda</taxon>
    </lineage>
</organism>
<protein>
    <recommendedName>
        <fullName>Head completion protein gp3</fullName>
    </recommendedName>
    <alternativeName>
        <fullName>Gene product 3</fullName>
        <shortName>gp3</shortName>
    </alternativeName>
    <alternativeName>
        <fullName>Head-stabilizing protein</fullName>
    </alternativeName>
    <alternativeName>
        <fullName>Head-tail joining protein</fullName>
    </alternativeName>
</protein>
<accession>P68656</accession>
<accession>P36271</accession>
<proteinExistence type="inferred from homology"/>